<comment type="function">
    <text evidence="1">Catalyzes the reduction of FMN to FMNH2 which is used to reduce pyrimidine by RutA via the Rut pathway.</text>
</comment>
<comment type="catalytic activity">
    <reaction evidence="1">
        <text>FMNH2 + NAD(+) = FMN + NADH + 2 H(+)</text>
        <dbReference type="Rhea" id="RHEA:21620"/>
        <dbReference type="ChEBI" id="CHEBI:15378"/>
        <dbReference type="ChEBI" id="CHEBI:57540"/>
        <dbReference type="ChEBI" id="CHEBI:57618"/>
        <dbReference type="ChEBI" id="CHEBI:57945"/>
        <dbReference type="ChEBI" id="CHEBI:58210"/>
        <dbReference type="EC" id="1.5.1.42"/>
    </reaction>
</comment>
<comment type="induction">
    <text evidence="1">Up-regulated by the nitrogen regulatory protein C (NtrC also called GlnG) and repressed by RutR.</text>
</comment>
<comment type="similarity">
    <text evidence="1">Belongs to the non-flavoprotein flavin reductase family. RutF subfamily.</text>
</comment>
<organism>
    <name type="scientific">Escherichia coli O55:H7 (strain CB9615 / EPEC)</name>
    <dbReference type="NCBI Taxonomy" id="701177"/>
    <lineage>
        <taxon>Bacteria</taxon>
        <taxon>Pseudomonadati</taxon>
        <taxon>Pseudomonadota</taxon>
        <taxon>Gammaproteobacteria</taxon>
        <taxon>Enterobacterales</taxon>
        <taxon>Enterobacteriaceae</taxon>
        <taxon>Escherichia</taxon>
    </lineage>
</organism>
<protein>
    <recommendedName>
        <fullName evidence="1">FMN reductase (NADH) RutF</fullName>
        <ecNumber evidence="1">1.5.1.42</ecNumber>
    </recommendedName>
    <alternativeName>
        <fullName evidence="1">FMN reductase</fullName>
    </alternativeName>
    <alternativeName>
        <fullName evidence="1">NADH-flavin reductase RutF</fullName>
    </alternativeName>
    <alternativeName>
        <fullName evidence="1">NADH:flavin oxidoreductase</fullName>
    </alternativeName>
</protein>
<dbReference type="EC" id="1.5.1.42" evidence="1"/>
<dbReference type="EMBL" id="CP001846">
    <property type="protein sequence ID" value="ADD55838.1"/>
    <property type="molecule type" value="Genomic_DNA"/>
</dbReference>
<dbReference type="RefSeq" id="WP_001028095.1">
    <property type="nucleotide sequence ID" value="NC_013941.1"/>
</dbReference>
<dbReference type="SMR" id="D3QPK0"/>
<dbReference type="GeneID" id="75171083"/>
<dbReference type="KEGG" id="eok:G2583_1240"/>
<dbReference type="HOGENOM" id="CLU_059021_2_2_6"/>
<dbReference type="GO" id="GO:0010181">
    <property type="term" value="F:FMN binding"/>
    <property type="evidence" value="ECO:0007669"/>
    <property type="project" value="InterPro"/>
</dbReference>
<dbReference type="GO" id="GO:0052874">
    <property type="term" value="F:FMN reductase (NADH) activity"/>
    <property type="evidence" value="ECO:0007669"/>
    <property type="project" value="UniProtKB-EC"/>
</dbReference>
<dbReference type="GO" id="GO:0008752">
    <property type="term" value="F:FMN reductase [NAD(P)H] activity"/>
    <property type="evidence" value="ECO:0007669"/>
    <property type="project" value="InterPro"/>
</dbReference>
<dbReference type="GO" id="GO:0042602">
    <property type="term" value="F:riboflavin reductase (NADPH) activity"/>
    <property type="evidence" value="ECO:0007669"/>
    <property type="project" value="UniProtKB-UniRule"/>
</dbReference>
<dbReference type="GO" id="GO:0019740">
    <property type="term" value="P:nitrogen utilization"/>
    <property type="evidence" value="ECO:0007669"/>
    <property type="project" value="UniProtKB-UniRule"/>
</dbReference>
<dbReference type="GO" id="GO:0006212">
    <property type="term" value="P:uracil catabolic process"/>
    <property type="evidence" value="ECO:0007669"/>
    <property type="project" value="UniProtKB-UniRule"/>
</dbReference>
<dbReference type="FunFam" id="2.30.110.10:FF:000002">
    <property type="entry name" value="FMN reductase (NADH) RutF"/>
    <property type="match status" value="1"/>
</dbReference>
<dbReference type="Gene3D" id="2.30.110.10">
    <property type="entry name" value="Electron Transport, Fmn-binding Protein, Chain A"/>
    <property type="match status" value="1"/>
</dbReference>
<dbReference type="HAMAP" id="MF_00833">
    <property type="entry name" value="RutF"/>
    <property type="match status" value="1"/>
</dbReference>
<dbReference type="InterPro" id="IPR002563">
    <property type="entry name" value="Flavin_Rdtase-like_dom"/>
</dbReference>
<dbReference type="InterPro" id="IPR050268">
    <property type="entry name" value="NADH-dep_flavin_reductase"/>
</dbReference>
<dbReference type="InterPro" id="IPR019917">
    <property type="entry name" value="RutF"/>
</dbReference>
<dbReference type="InterPro" id="IPR012349">
    <property type="entry name" value="Split_barrel_FMN-bd"/>
</dbReference>
<dbReference type="NCBIfam" id="TIGR03615">
    <property type="entry name" value="RutF"/>
    <property type="match status" value="1"/>
</dbReference>
<dbReference type="PANTHER" id="PTHR30466">
    <property type="entry name" value="FLAVIN REDUCTASE"/>
    <property type="match status" value="1"/>
</dbReference>
<dbReference type="PANTHER" id="PTHR30466:SF1">
    <property type="entry name" value="FMN REDUCTASE (NADH) RUTF"/>
    <property type="match status" value="1"/>
</dbReference>
<dbReference type="Pfam" id="PF01613">
    <property type="entry name" value="Flavin_Reduct"/>
    <property type="match status" value="1"/>
</dbReference>
<dbReference type="SMART" id="SM00903">
    <property type="entry name" value="Flavin_Reduct"/>
    <property type="match status" value="1"/>
</dbReference>
<dbReference type="SUPFAM" id="SSF50475">
    <property type="entry name" value="FMN-binding split barrel"/>
    <property type="match status" value="1"/>
</dbReference>
<sequence length="164" mass="17747">MNIVDQQTFRDAMSCMGAAVNIITTDGPAGRAGFTASAVCSVTDTPPTLLVCLNRGASVWPVFNENRTLCVNTLSAGQEPLSNLFGGKTPMEHRFAAARWQTGVTGCPQLEEALVSFDCRISQVVSVGTHDILFCAIEAIHRHATPYGLVWFDRSYHALMRPAC</sequence>
<proteinExistence type="inferred from homology"/>
<evidence type="ECO:0000255" key="1">
    <source>
        <dbReference type="HAMAP-Rule" id="MF_00833"/>
    </source>
</evidence>
<feature type="chain" id="PRO_0000403021" description="FMN reductase (NADH) RutF">
    <location>
        <begin position="1"/>
        <end position="164"/>
    </location>
</feature>
<name>RUTF_ECOCB</name>
<reference key="1">
    <citation type="journal article" date="2010" name="PLoS ONE">
        <title>Derivation of Escherichia coli O157:H7 from its O55:H7 precursor.</title>
        <authorList>
            <person name="Zhou Z."/>
            <person name="Li X."/>
            <person name="Liu B."/>
            <person name="Beutin L."/>
            <person name="Xu J."/>
            <person name="Ren Y."/>
            <person name="Feng L."/>
            <person name="Lan R."/>
            <person name="Reeves P.R."/>
            <person name="Wang L."/>
        </authorList>
    </citation>
    <scope>NUCLEOTIDE SEQUENCE [LARGE SCALE GENOMIC DNA]</scope>
    <source>
        <strain>CB9615 / EPEC</strain>
    </source>
</reference>
<gene>
    <name evidence="1" type="primary">rutF</name>
    <name type="ordered locus">G2583_1240</name>
</gene>
<accession>D3QPK0</accession>
<keyword id="KW-0285">Flavoprotein</keyword>
<keyword id="KW-0288">FMN</keyword>
<keyword id="KW-0520">NAD</keyword>
<keyword id="KW-0560">Oxidoreductase</keyword>